<comment type="function">
    <text evidence="1">An essential GTPase which binds GTP, GDP and possibly (p)ppGpp with moderate affinity, with high nucleotide exchange rates and a fairly low GTP hydrolysis rate. Plays a role in control of the cell cycle, stress response, ribosome biogenesis and in those bacteria that undergo differentiation, in morphogenesis control.</text>
</comment>
<comment type="cofactor">
    <cofactor evidence="1">
        <name>Mg(2+)</name>
        <dbReference type="ChEBI" id="CHEBI:18420"/>
    </cofactor>
</comment>
<comment type="cofactor">
    <cofactor evidence="3">
        <name>[4Fe-4S] cluster</name>
        <dbReference type="ChEBI" id="CHEBI:49883"/>
    </cofactor>
</comment>
<comment type="subunit">
    <text evidence="1">Monomer.</text>
</comment>
<comment type="subcellular location">
    <subcellularLocation>
        <location evidence="1">Cytoplasm</location>
    </subcellularLocation>
</comment>
<comment type="similarity">
    <text evidence="1">Belongs to the TRAFAC class OBG-HflX-like GTPase superfamily. OBG GTPase family.</text>
</comment>
<name>OBG_BRAHW</name>
<evidence type="ECO:0000255" key="1">
    <source>
        <dbReference type="HAMAP-Rule" id="MF_01454"/>
    </source>
</evidence>
<evidence type="ECO:0000255" key="2">
    <source>
        <dbReference type="PROSITE-ProRule" id="PRU01231"/>
    </source>
</evidence>
<evidence type="ECO:0000255" key="3">
    <source>
        <dbReference type="PROSITE-ProRule" id="PRU01266"/>
    </source>
</evidence>
<protein>
    <recommendedName>
        <fullName evidence="1">GTPase Obg</fullName>
        <ecNumber evidence="1">3.6.5.-</ecNumber>
    </recommendedName>
    <alternativeName>
        <fullName evidence="1">GTP-binding protein Obg</fullName>
    </alternativeName>
</protein>
<reference key="1">
    <citation type="journal article" date="2009" name="PLoS ONE">
        <title>Genome sequence of the pathogenic intestinal spirochete Brachyspira hyodysenteriae reveals adaptations to its lifestyle in the porcine large intestine.</title>
        <authorList>
            <person name="Bellgard M.I."/>
            <person name="Wanchanthuek P."/>
            <person name="La T."/>
            <person name="Ryan K."/>
            <person name="Moolhuijzen P."/>
            <person name="Albertyn Z."/>
            <person name="Shaban B."/>
            <person name="Motro Y."/>
            <person name="Dunn D.S."/>
            <person name="Schibeci D."/>
            <person name="Hunter A."/>
            <person name="Barrero R."/>
            <person name="Phillips N.D."/>
            <person name="Hampson D.J."/>
        </authorList>
    </citation>
    <scope>NUCLEOTIDE SEQUENCE [LARGE SCALE GENOMIC DNA]</scope>
    <source>
        <strain>ATCC 49526 / WA1</strain>
    </source>
</reference>
<keyword id="KW-0004">4Fe-4S</keyword>
<keyword id="KW-0963">Cytoplasm</keyword>
<keyword id="KW-0342">GTP-binding</keyword>
<keyword id="KW-0378">Hydrolase</keyword>
<keyword id="KW-0408">Iron</keyword>
<keyword id="KW-0411">Iron-sulfur</keyword>
<keyword id="KW-0460">Magnesium</keyword>
<keyword id="KW-0479">Metal-binding</keyword>
<keyword id="KW-0547">Nucleotide-binding</keyword>
<keyword id="KW-0949">S-adenosyl-L-methionine</keyword>
<gene>
    <name evidence="1" type="primary">obg</name>
    <name type="ordered locus">BHWA1_00207</name>
</gene>
<accession>C0QX49</accession>
<sequence>MDQFIDVVSFEIEAGHGGAGSVSFRREAHVPMGGPDGGNGGDGGDVIVRVDARINSFGKIKSRKRFRARDGEPGRARLSDGKRGDDVVIRVPIGTVVYDEDTNNILADLLEDGQSYTVARGGKGGKGNKFYATATNQAPDYAQHGLDGEKLNIRLEVKLIADIGLVGMPNTGKSSLLARLTRANPKIASYPFTTLTPNLGVCYLDYERSFVIADIPGIIEGASEGAGLGLTFLRHIERTGALCFVIDLTDEDVADTYKKLRNELKQYSKELIKKKSIIVLNKTDMLEKDEIKAKVKAIEKAVKKEYKNNKETHYEEPEIFALSVFSLDGDMLDKVTNAFYKANEERYDNTKKETKEPLLLNQNKTKSKLKTKRVFGPVVSKRLGNSLGIDVIPHKTCSYNCIYCQLGSEENTKTSLANYYSVDEIIYELKEALLNNKNIDYITFAGSGEPTLYKDLKKLIYEIKQITDIPVCIITNGSLLYKQEMRSDLLIADLVIPSLDAGNMDTFKLIDQPNKEIDFDKMVNGLIEFRRVFKGEYWLEVFLLKDINDSKEELDDIIKIVNKIKPDRVQLVTATRRTSNEKAKALNDEEMEKAKKYFEANCSIEIDVPSVSDKAKGNTKKITEEDIINFLIRQPDTVHMIAISFNEDESRVSELLKKLVESGKVREEIVNGVLSYAVNI</sequence>
<dbReference type="EC" id="3.6.5.-" evidence="1"/>
<dbReference type="EMBL" id="CP001357">
    <property type="protein sequence ID" value="ACN82707.1"/>
    <property type="molecule type" value="Genomic_DNA"/>
</dbReference>
<dbReference type="RefSeq" id="WP_012669760.1">
    <property type="nucleotide sequence ID" value="NC_012225.1"/>
</dbReference>
<dbReference type="SMR" id="C0QX49"/>
<dbReference type="STRING" id="565034.BHWA1_00207"/>
<dbReference type="KEGG" id="bhy:BHWA1_00207"/>
<dbReference type="eggNOG" id="COG0536">
    <property type="taxonomic scope" value="Bacteria"/>
</dbReference>
<dbReference type="eggNOG" id="COG0731">
    <property type="taxonomic scope" value="Bacteria"/>
</dbReference>
<dbReference type="HOGENOM" id="CLU_025853_0_0_12"/>
<dbReference type="Proteomes" id="UP000001803">
    <property type="component" value="Chromosome"/>
</dbReference>
<dbReference type="GO" id="GO:0005737">
    <property type="term" value="C:cytoplasm"/>
    <property type="evidence" value="ECO:0007669"/>
    <property type="project" value="UniProtKB-SubCell"/>
</dbReference>
<dbReference type="GO" id="GO:0051539">
    <property type="term" value="F:4 iron, 4 sulfur cluster binding"/>
    <property type="evidence" value="ECO:0007669"/>
    <property type="project" value="UniProtKB-KW"/>
</dbReference>
<dbReference type="GO" id="GO:0005525">
    <property type="term" value="F:GTP binding"/>
    <property type="evidence" value="ECO:0007669"/>
    <property type="project" value="UniProtKB-UniRule"/>
</dbReference>
<dbReference type="GO" id="GO:0003924">
    <property type="term" value="F:GTPase activity"/>
    <property type="evidence" value="ECO:0007669"/>
    <property type="project" value="UniProtKB-UniRule"/>
</dbReference>
<dbReference type="GO" id="GO:0000287">
    <property type="term" value="F:magnesium ion binding"/>
    <property type="evidence" value="ECO:0007669"/>
    <property type="project" value="InterPro"/>
</dbReference>
<dbReference type="GO" id="GO:0042254">
    <property type="term" value="P:ribosome biogenesis"/>
    <property type="evidence" value="ECO:0007669"/>
    <property type="project" value="UniProtKB-UniRule"/>
</dbReference>
<dbReference type="CDD" id="cd01898">
    <property type="entry name" value="Obg"/>
    <property type="match status" value="1"/>
</dbReference>
<dbReference type="CDD" id="cd01335">
    <property type="entry name" value="Radical_SAM"/>
    <property type="match status" value="1"/>
</dbReference>
<dbReference type="FunFam" id="2.70.210.12:FF:000001">
    <property type="entry name" value="GTPase Obg"/>
    <property type="match status" value="1"/>
</dbReference>
<dbReference type="Gene3D" id="3.20.20.70">
    <property type="entry name" value="Aldolase class I"/>
    <property type="match status" value="1"/>
</dbReference>
<dbReference type="Gene3D" id="2.70.210.12">
    <property type="entry name" value="GTP1/OBG domain"/>
    <property type="match status" value="1"/>
</dbReference>
<dbReference type="Gene3D" id="3.40.50.300">
    <property type="entry name" value="P-loop containing nucleotide triphosphate hydrolases"/>
    <property type="match status" value="1"/>
</dbReference>
<dbReference type="HAMAP" id="MF_01454">
    <property type="entry name" value="GTPase_Obg"/>
    <property type="match status" value="1"/>
</dbReference>
<dbReference type="InterPro" id="IPR013785">
    <property type="entry name" value="Aldolase_TIM"/>
</dbReference>
<dbReference type="InterPro" id="IPR031167">
    <property type="entry name" value="G_OBG"/>
</dbReference>
<dbReference type="InterPro" id="IPR006073">
    <property type="entry name" value="GTP-bd"/>
</dbReference>
<dbReference type="InterPro" id="IPR014100">
    <property type="entry name" value="GTP-bd_Obg/CgtA"/>
</dbReference>
<dbReference type="InterPro" id="IPR006074">
    <property type="entry name" value="GTP1-OBG_CS"/>
</dbReference>
<dbReference type="InterPro" id="IPR006169">
    <property type="entry name" value="GTP1_OBG_dom"/>
</dbReference>
<dbReference type="InterPro" id="IPR036726">
    <property type="entry name" value="GTP1_OBG_dom_sf"/>
</dbReference>
<dbReference type="InterPro" id="IPR040084">
    <property type="entry name" value="GTPase_Obg"/>
</dbReference>
<dbReference type="InterPro" id="IPR045086">
    <property type="entry name" value="OBG_GTPase"/>
</dbReference>
<dbReference type="InterPro" id="IPR027417">
    <property type="entry name" value="P-loop_NTPase"/>
</dbReference>
<dbReference type="InterPro" id="IPR007197">
    <property type="entry name" value="rSAM"/>
</dbReference>
<dbReference type="NCBIfam" id="TIGR02729">
    <property type="entry name" value="Obg_CgtA"/>
    <property type="match status" value="1"/>
</dbReference>
<dbReference type="NCBIfam" id="NF008955">
    <property type="entry name" value="PRK12297.1"/>
    <property type="match status" value="1"/>
</dbReference>
<dbReference type="NCBIfam" id="NF008956">
    <property type="entry name" value="PRK12299.1"/>
    <property type="match status" value="1"/>
</dbReference>
<dbReference type="PANTHER" id="PTHR11702">
    <property type="entry name" value="DEVELOPMENTALLY REGULATED GTP-BINDING PROTEIN-RELATED"/>
    <property type="match status" value="1"/>
</dbReference>
<dbReference type="PANTHER" id="PTHR11702:SF31">
    <property type="entry name" value="MITOCHONDRIAL RIBOSOME-ASSOCIATED GTPASE 2"/>
    <property type="match status" value="1"/>
</dbReference>
<dbReference type="Pfam" id="PF01018">
    <property type="entry name" value="GTP1_OBG"/>
    <property type="match status" value="1"/>
</dbReference>
<dbReference type="Pfam" id="PF01926">
    <property type="entry name" value="MMR_HSR1"/>
    <property type="match status" value="1"/>
</dbReference>
<dbReference type="Pfam" id="PF04055">
    <property type="entry name" value="Radical_SAM"/>
    <property type="match status" value="1"/>
</dbReference>
<dbReference type="PRINTS" id="PR00326">
    <property type="entry name" value="GTP1OBG"/>
</dbReference>
<dbReference type="SFLD" id="SFLDS00029">
    <property type="entry name" value="Radical_SAM"/>
    <property type="match status" value="1"/>
</dbReference>
<dbReference type="SFLD" id="SFLDG01067">
    <property type="entry name" value="SPASM/twitch_domain_containing"/>
    <property type="match status" value="1"/>
</dbReference>
<dbReference type="SFLD" id="SFLDG01083">
    <property type="entry name" value="Uncharacterised_Radical_SAM_Su"/>
    <property type="match status" value="1"/>
</dbReference>
<dbReference type="SUPFAM" id="SSF82051">
    <property type="entry name" value="Obg GTP-binding protein N-terminal domain"/>
    <property type="match status" value="1"/>
</dbReference>
<dbReference type="SUPFAM" id="SSF52540">
    <property type="entry name" value="P-loop containing nucleoside triphosphate hydrolases"/>
    <property type="match status" value="1"/>
</dbReference>
<dbReference type="SUPFAM" id="SSF102114">
    <property type="entry name" value="Radical SAM enzymes"/>
    <property type="match status" value="1"/>
</dbReference>
<dbReference type="PROSITE" id="PS51710">
    <property type="entry name" value="G_OBG"/>
    <property type="match status" value="1"/>
</dbReference>
<dbReference type="PROSITE" id="PS00905">
    <property type="entry name" value="GTP1_OBG"/>
    <property type="match status" value="1"/>
</dbReference>
<dbReference type="PROSITE" id="PS51883">
    <property type="entry name" value="OBG"/>
    <property type="match status" value="1"/>
</dbReference>
<dbReference type="PROSITE" id="PS51918">
    <property type="entry name" value="RADICAL_SAM"/>
    <property type="match status" value="1"/>
</dbReference>
<organism>
    <name type="scientific">Brachyspira hyodysenteriae (strain ATCC 49526 / WA1)</name>
    <dbReference type="NCBI Taxonomy" id="565034"/>
    <lineage>
        <taxon>Bacteria</taxon>
        <taxon>Pseudomonadati</taxon>
        <taxon>Spirochaetota</taxon>
        <taxon>Spirochaetia</taxon>
        <taxon>Brachyspirales</taxon>
        <taxon>Brachyspiraceae</taxon>
        <taxon>Brachyspira</taxon>
    </lineage>
</organism>
<feature type="chain" id="PRO_0000386416" description="GTPase Obg">
    <location>
        <begin position="1"/>
        <end position="680"/>
    </location>
</feature>
<feature type="domain" description="Obg" evidence="2">
    <location>
        <begin position="2"/>
        <end position="160"/>
    </location>
</feature>
<feature type="domain" description="OBG-type G" evidence="1">
    <location>
        <begin position="161"/>
        <end position="336"/>
    </location>
</feature>
<feature type="domain" description="Radical SAM core" evidence="3">
    <location>
        <begin position="383"/>
        <end position="613"/>
    </location>
</feature>
<feature type="region of interest" description="Radical SAM domain">
    <location>
        <begin position="371"/>
        <end position="680"/>
    </location>
</feature>
<feature type="binding site" evidence="1">
    <location>
        <begin position="167"/>
        <end position="174"/>
    </location>
    <ligand>
        <name>GTP</name>
        <dbReference type="ChEBI" id="CHEBI:37565"/>
    </ligand>
</feature>
<feature type="binding site" evidence="1">
    <location>
        <position position="174"/>
    </location>
    <ligand>
        <name>Mg(2+)</name>
        <dbReference type="ChEBI" id="CHEBI:18420"/>
    </ligand>
</feature>
<feature type="binding site" evidence="1">
    <location>
        <begin position="192"/>
        <end position="196"/>
    </location>
    <ligand>
        <name>GTP</name>
        <dbReference type="ChEBI" id="CHEBI:37565"/>
    </ligand>
</feature>
<feature type="binding site" evidence="1">
    <location>
        <position position="194"/>
    </location>
    <ligand>
        <name>Mg(2+)</name>
        <dbReference type="ChEBI" id="CHEBI:18420"/>
    </ligand>
</feature>
<feature type="binding site" evidence="1">
    <location>
        <begin position="214"/>
        <end position="217"/>
    </location>
    <ligand>
        <name>GTP</name>
        <dbReference type="ChEBI" id="CHEBI:37565"/>
    </ligand>
</feature>
<feature type="binding site" evidence="1">
    <location>
        <begin position="281"/>
        <end position="284"/>
    </location>
    <ligand>
        <name>GTP</name>
        <dbReference type="ChEBI" id="CHEBI:37565"/>
    </ligand>
</feature>
<feature type="binding site" evidence="1">
    <location>
        <begin position="317"/>
        <end position="319"/>
    </location>
    <ligand>
        <name>GTP</name>
        <dbReference type="ChEBI" id="CHEBI:37565"/>
    </ligand>
</feature>
<feature type="binding site" evidence="3">
    <location>
        <position position="397"/>
    </location>
    <ligand>
        <name>[4Fe-4S] cluster</name>
        <dbReference type="ChEBI" id="CHEBI:49883"/>
        <note>4Fe-4S-S-AdoMet</note>
    </ligand>
</feature>
<feature type="binding site" evidence="3">
    <location>
        <position position="401"/>
    </location>
    <ligand>
        <name>[4Fe-4S] cluster</name>
        <dbReference type="ChEBI" id="CHEBI:49883"/>
        <note>4Fe-4S-S-AdoMet</note>
    </ligand>
</feature>
<feature type="binding site" evidence="3">
    <location>
        <position position="404"/>
    </location>
    <ligand>
        <name>[4Fe-4S] cluster</name>
        <dbReference type="ChEBI" id="CHEBI:49883"/>
        <note>4Fe-4S-S-AdoMet</note>
    </ligand>
</feature>
<proteinExistence type="inferred from homology"/>